<evidence type="ECO:0000255" key="1"/>
<evidence type="ECO:0000305" key="2"/>
<name>Y2315_MYCBO</name>
<reference key="1">
    <citation type="journal article" date="2003" name="Proc. Natl. Acad. Sci. U.S.A.">
        <title>The complete genome sequence of Mycobacterium bovis.</title>
        <authorList>
            <person name="Garnier T."/>
            <person name="Eiglmeier K."/>
            <person name="Camus J.-C."/>
            <person name="Medina N."/>
            <person name="Mansoor H."/>
            <person name="Pryor M."/>
            <person name="Duthoy S."/>
            <person name="Grondin S."/>
            <person name="Lacroix C."/>
            <person name="Monsempe C."/>
            <person name="Simon S."/>
            <person name="Harris B."/>
            <person name="Atkin R."/>
            <person name="Doggett J."/>
            <person name="Mayes R."/>
            <person name="Keating L."/>
            <person name="Wheeler P.R."/>
            <person name="Parkhill J."/>
            <person name="Barrell B.G."/>
            <person name="Cole S.T."/>
            <person name="Gordon S.V."/>
            <person name="Hewinson R.G."/>
        </authorList>
    </citation>
    <scope>NUCLEOTIDE SEQUENCE [LARGE SCALE GENOMIC DNA]</scope>
    <source>
        <strain>ATCC BAA-935 / AF2122/97</strain>
    </source>
</reference>
<reference key="2">
    <citation type="journal article" date="2017" name="Genome Announc.">
        <title>Updated reference genome sequence and annotation of Mycobacterium bovis AF2122/97.</title>
        <authorList>
            <person name="Malone K.M."/>
            <person name="Farrell D."/>
            <person name="Stuber T.P."/>
            <person name="Schubert O.T."/>
            <person name="Aebersold R."/>
            <person name="Robbe-Austerman S."/>
            <person name="Gordon S.V."/>
        </authorList>
    </citation>
    <scope>NUCLEOTIDE SEQUENCE [LARGE SCALE GENOMIC DNA]</scope>
    <scope>GENOME REANNOTATION</scope>
    <source>
        <strain>ATCC BAA-935 / AF2122/97</strain>
    </source>
</reference>
<dbReference type="EMBL" id="LT708304">
    <property type="protein sequence ID" value="SIU00927.1"/>
    <property type="status" value="ALT_INIT"/>
    <property type="molecule type" value="Genomic_DNA"/>
</dbReference>
<dbReference type="RefSeq" id="NP_855964.1">
    <property type="nucleotide sequence ID" value="NC_002945.3"/>
</dbReference>
<dbReference type="SMR" id="P64978"/>
<dbReference type="KEGG" id="mbo:BQ2027_MB2315C"/>
<dbReference type="PATRIC" id="fig|233413.5.peg.2539"/>
<dbReference type="Proteomes" id="UP000001419">
    <property type="component" value="Chromosome"/>
</dbReference>
<dbReference type="GO" id="GO:0003824">
    <property type="term" value="F:catalytic activity"/>
    <property type="evidence" value="ECO:0007669"/>
    <property type="project" value="InterPro"/>
</dbReference>
<dbReference type="GO" id="GO:0009116">
    <property type="term" value="P:nucleoside metabolic process"/>
    <property type="evidence" value="ECO:0007669"/>
    <property type="project" value="InterPro"/>
</dbReference>
<dbReference type="Gene3D" id="3.40.50.1580">
    <property type="entry name" value="Nucleoside phosphorylase domain"/>
    <property type="match status" value="1"/>
</dbReference>
<dbReference type="InterPro" id="IPR000845">
    <property type="entry name" value="Nucleoside_phosphorylase_d"/>
</dbReference>
<dbReference type="InterPro" id="IPR035994">
    <property type="entry name" value="Nucleoside_phosphorylase_sf"/>
</dbReference>
<dbReference type="Pfam" id="PF01048">
    <property type="entry name" value="PNP_UDP_1"/>
    <property type="match status" value="1"/>
</dbReference>
<dbReference type="SUPFAM" id="SSF53167">
    <property type="entry name" value="Purine and uridine phosphorylases"/>
    <property type="match status" value="1"/>
</dbReference>
<gene>
    <name type="ordered locus">BQ2027_MB2315C</name>
</gene>
<keyword id="KW-1185">Reference proteome</keyword>
<keyword id="KW-0732">Signal</keyword>
<sequence length="74" mass="7784">MNPGFDAVDQETAAAQAVADAHGVPFLGIRGMSDGPGDPLHLPGFPVQFFVYKQIAANNAARVTEAFLQNWAGV</sequence>
<protein>
    <recommendedName>
        <fullName>Uncharacterized protein Mb2315c</fullName>
    </recommendedName>
</protein>
<proteinExistence type="inferred from homology"/>
<accession>P64978</accession>
<accession>A0A1R3Y154</accession>
<accession>Q50674</accession>
<accession>X2BKP3</accession>
<feature type="signal peptide" evidence="1">
    <location>
        <begin position="1"/>
        <end position="19"/>
    </location>
</feature>
<feature type="chain" id="PRO_0000014129" description="Uncharacterized protein Mb2315c">
    <location>
        <begin position="20"/>
        <end position="74"/>
    </location>
</feature>
<comment type="sequence caution" evidence="2">
    <conflict type="erroneous initiation">
        <sequence resource="EMBL-CDS" id="SIU00927"/>
    </conflict>
    <text>Extended N-terminus.</text>
</comment>
<organism>
    <name type="scientific">Mycobacterium bovis (strain ATCC BAA-935 / AF2122/97)</name>
    <dbReference type="NCBI Taxonomy" id="233413"/>
    <lineage>
        <taxon>Bacteria</taxon>
        <taxon>Bacillati</taxon>
        <taxon>Actinomycetota</taxon>
        <taxon>Actinomycetes</taxon>
        <taxon>Mycobacteriales</taxon>
        <taxon>Mycobacteriaceae</taxon>
        <taxon>Mycobacterium</taxon>
        <taxon>Mycobacterium tuberculosis complex</taxon>
    </lineage>
</organism>